<reference key="1">
    <citation type="journal article" date="2007" name="Genome Biol.">
        <title>Characterization and modeling of the Haemophilus influenzae core and supragenomes based on the complete genomic sequences of Rd and 12 clinical nontypeable strains.</title>
        <authorList>
            <person name="Hogg J.S."/>
            <person name="Hu F.Z."/>
            <person name="Janto B."/>
            <person name="Boissy R."/>
            <person name="Hayes J."/>
            <person name="Keefe R."/>
            <person name="Post J.C."/>
            <person name="Ehrlich G.D."/>
        </authorList>
    </citation>
    <scope>NUCLEOTIDE SEQUENCE [LARGE SCALE GENOMIC DNA]</scope>
    <source>
        <strain>PittEE</strain>
    </source>
</reference>
<feature type="chain" id="PRO_1000068083" description="Large ribosomal subunit protein uL23">
    <location>
        <begin position="1"/>
        <end position="109"/>
    </location>
</feature>
<protein>
    <recommendedName>
        <fullName evidence="1">Large ribosomal subunit protein uL23</fullName>
    </recommendedName>
    <alternativeName>
        <fullName evidence="2">50S ribosomal protein L23</fullName>
    </alternativeName>
</protein>
<evidence type="ECO:0000255" key="1">
    <source>
        <dbReference type="HAMAP-Rule" id="MF_01369"/>
    </source>
</evidence>
<evidence type="ECO:0000305" key="2"/>
<proteinExistence type="inferred from homology"/>
<sequence length="109" mass="12296">MSQERLLSVLRAPHISEKATNNAEKSNTVVLKVALDANKAEIAAAVAQLFEVKVDSVRTVVVKGKTKRRGNKMGRRSDWKKAYVTLAKAKIWTSWTVQSNRRKLENGYR</sequence>
<gene>
    <name evidence="1" type="primary">rplW</name>
    <name type="ordered locus">CGSHiEE_08165</name>
</gene>
<accession>A5UDU5</accession>
<keyword id="KW-0687">Ribonucleoprotein</keyword>
<keyword id="KW-0689">Ribosomal protein</keyword>
<keyword id="KW-0694">RNA-binding</keyword>
<keyword id="KW-0699">rRNA-binding</keyword>
<organism>
    <name type="scientific">Haemophilus influenzae (strain PittEE)</name>
    <dbReference type="NCBI Taxonomy" id="374930"/>
    <lineage>
        <taxon>Bacteria</taxon>
        <taxon>Pseudomonadati</taxon>
        <taxon>Pseudomonadota</taxon>
        <taxon>Gammaproteobacteria</taxon>
        <taxon>Pasteurellales</taxon>
        <taxon>Pasteurellaceae</taxon>
        <taxon>Haemophilus</taxon>
    </lineage>
</organism>
<comment type="function">
    <text evidence="1">One of the early assembly proteins it binds 23S rRNA. One of the proteins that surrounds the polypeptide exit tunnel on the outside of the ribosome. Forms the main docking site for trigger factor binding to the ribosome.</text>
</comment>
<comment type="subunit">
    <text evidence="1">Part of the 50S ribosomal subunit. Contacts protein L29, and trigger factor when it is bound to the ribosome.</text>
</comment>
<comment type="similarity">
    <text evidence="1">Belongs to the universal ribosomal protein uL23 family.</text>
</comment>
<name>RL23_HAEIE</name>
<dbReference type="EMBL" id="CP000671">
    <property type="protein sequence ID" value="ABQ98946.1"/>
    <property type="molecule type" value="Genomic_DNA"/>
</dbReference>
<dbReference type="SMR" id="A5UDU5"/>
<dbReference type="KEGG" id="hip:CGSHiEE_08165"/>
<dbReference type="HOGENOM" id="CLU_037562_3_1_6"/>
<dbReference type="GO" id="GO:1990904">
    <property type="term" value="C:ribonucleoprotein complex"/>
    <property type="evidence" value="ECO:0007669"/>
    <property type="project" value="UniProtKB-KW"/>
</dbReference>
<dbReference type="GO" id="GO:0005840">
    <property type="term" value="C:ribosome"/>
    <property type="evidence" value="ECO:0007669"/>
    <property type="project" value="UniProtKB-KW"/>
</dbReference>
<dbReference type="GO" id="GO:0019843">
    <property type="term" value="F:rRNA binding"/>
    <property type="evidence" value="ECO:0007669"/>
    <property type="project" value="UniProtKB-UniRule"/>
</dbReference>
<dbReference type="GO" id="GO:0003735">
    <property type="term" value="F:structural constituent of ribosome"/>
    <property type="evidence" value="ECO:0007669"/>
    <property type="project" value="InterPro"/>
</dbReference>
<dbReference type="GO" id="GO:0006412">
    <property type="term" value="P:translation"/>
    <property type="evidence" value="ECO:0007669"/>
    <property type="project" value="UniProtKB-UniRule"/>
</dbReference>
<dbReference type="FunFam" id="3.30.70.330:FF:000001">
    <property type="entry name" value="50S ribosomal protein L23"/>
    <property type="match status" value="1"/>
</dbReference>
<dbReference type="Gene3D" id="3.30.70.330">
    <property type="match status" value="1"/>
</dbReference>
<dbReference type="HAMAP" id="MF_01369_B">
    <property type="entry name" value="Ribosomal_uL23_B"/>
    <property type="match status" value="1"/>
</dbReference>
<dbReference type="InterPro" id="IPR012677">
    <property type="entry name" value="Nucleotide-bd_a/b_plait_sf"/>
</dbReference>
<dbReference type="InterPro" id="IPR013025">
    <property type="entry name" value="Ribosomal_uL23-like"/>
</dbReference>
<dbReference type="InterPro" id="IPR012678">
    <property type="entry name" value="Ribosomal_uL23/eL15/eS24_sf"/>
</dbReference>
<dbReference type="NCBIfam" id="NF004358">
    <property type="entry name" value="PRK05738.1-1"/>
    <property type="match status" value="1"/>
</dbReference>
<dbReference type="NCBIfam" id="NF004359">
    <property type="entry name" value="PRK05738.1-3"/>
    <property type="match status" value="1"/>
</dbReference>
<dbReference type="NCBIfam" id="NF004363">
    <property type="entry name" value="PRK05738.2-4"/>
    <property type="match status" value="1"/>
</dbReference>
<dbReference type="PANTHER" id="PTHR11620">
    <property type="entry name" value="60S RIBOSOMAL PROTEIN L23A"/>
    <property type="match status" value="1"/>
</dbReference>
<dbReference type="Pfam" id="PF00276">
    <property type="entry name" value="Ribosomal_L23"/>
    <property type="match status" value="1"/>
</dbReference>
<dbReference type="SUPFAM" id="SSF54189">
    <property type="entry name" value="Ribosomal proteins S24e, L23 and L15e"/>
    <property type="match status" value="1"/>
</dbReference>